<protein>
    <recommendedName>
        <fullName evidence="1">Maltose/maltodextrin import ATP-binding protein MalK</fullName>
        <ecNumber evidence="1">7.5.2.1</ecNumber>
    </recommendedName>
</protein>
<feature type="chain" id="PRO_0000092477" description="Maltose/maltodextrin import ATP-binding protein MalK">
    <location>
        <begin position="1"/>
        <end position="371"/>
    </location>
</feature>
<feature type="domain" description="ABC transporter" evidence="1">
    <location>
        <begin position="4"/>
        <end position="234"/>
    </location>
</feature>
<feature type="binding site" evidence="1">
    <location>
        <begin position="36"/>
        <end position="43"/>
    </location>
    <ligand>
        <name>ATP</name>
        <dbReference type="ChEBI" id="CHEBI:30616"/>
    </ligand>
</feature>
<proteinExistence type="inferred from homology"/>
<dbReference type="EC" id="7.5.2.1" evidence="1"/>
<dbReference type="EMBL" id="AE014075">
    <property type="protein sequence ID" value="AAN83431.1"/>
    <property type="status" value="ALT_INIT"/>
    <property type="molecule type" value="Genomic_DNA"/>
</dbReference>
<dbReference type="RefSeq" id="WP_001314343.1">
    <property type="nucleotide sequence ID" value="NZ_CP051263.1"/>
</dbReference>
<dbReference type="SMR" id="Q8FB37"/>
<dbReference type="STRING" id="199310.c5005"/>
<dbReference type="KEGG" id="ecc:c5005"/>
<dbReference type="eggNOG" id="COG3842">
    <property type="taxonomic scope" value="Bacteria"/>
</dbReference>
<dbReference type="HOGENOM" id="CLU_000604_1_1_6"/>
<dbReference type="Proteomes" id="UP000001410">
    <property type="component" value="Chromosome"/>
</dbReference>
<dbReference type="GO" id="GO:0055052">
    <property type="term" value="C:ATP-binding cassette (ABC) transporter complex, substrate-binding subunit-containing"/>
    <property type="evidence" value="ECO:0007669"/>
    <property type="project" value="TreeGrafter"/>
</dbReference>
<dbReference type="GO" id="GO:1990060">
    <property type="term" value="C:maltose transport complex"/>
    <property type="evidence" value="ECO:0007669"/>
    <property type="project" value="TreeGrafter"/>
</dbReference>
<dbReference type="GO" id="GO:0015423">
    <property type="term" value="F:ABC-type maltose transporter activity"/>
    <property type="evidence" value="ECO:0007669"/>
    <property type="project" value="UniProtKB-EC"/>
</dbReference>
<dbReference type="GO" id="GO:0005524">
    <property type="term" value="F:ATP binding"/>
    <property type="evidence" value="ECO:0007669"/>
    <property type="project" value="UniProtKB-KW"/>
</dbReference>
<dbReference type="GO" id="GO:0016887">
    <property type="term" value="F:ATP hydrolysis activity"/>
    <property type="evidence" value="ECO:0007669"/>
    <property type="project" value="InterPro"/>
</dbReference>
<dbReference type="CDD" id="cd03301">
    <property type="entry name" value="ABC_MalK_N"/>
    <property type="match status" value="1"/>
</dbReference>
<dbReference type="FunFam" id="3.40.50.300:FF:000042">
    <property type="entry name" value="Maltose/maltodextrin ABC transporter, ATP-binding protein"/>
    <property type="match status" value="1"/>
</dbReference>
<dbReference type="FunFam" id="2.40.50.100:FF:000014">
    <property type="entry name" value="Maltose/maltodextrin import ATP-binding protein MalK"/>
    <property type="match status" value="1"/>
</dbReference>
<dbReference type="FunFam" id="2.40.50.140:FF:000070">
    <property type="entry name" value="Maltose/maltodextrin import ATP-binding protein MalK"/>
    <property type="match status" value="1"/>
</dbReference>
<dbReference type="Gene3D" id="2.40.50.100">
    <property type="match status" value="1"/>
</dbReference>
<dbReference type="Gene3D" id="2.40.50.140">
    <property type="entry name" value="Nucleic acid-binding proteins"/>
    <property type="match status" value="1"/>
</dbReference>
<dbReference type="Gene3D" id="3.40.50.300">
    <property type="entry name" value="P-loop containing nucleotide triphosphate hydrolases"/>
    <property type="match status" value="1"/>
</dbReference>
<dbReference type="InterPro" id="IPR003593">
    <property type="entry name" value="AAA+_ATPase"/>
</dbReference>
<dbReference type="InterPro" id="IPR003439">
    <property type="entry name" value="ABC_transporter-like_ATP-bd"/>
</dbReference>
<dbReference type="InterPro" id="IPR017871">
    <property type="entry name" value="ABC_transporter-like_CS"/>
</dbReference>
<dbReference type="InterPro" id="IPR015855">
    <property type="entry name" value="ABC_transpr_MalK-like"/>
</dbReference>
<dbReference type="InterPro" id="IPR047641">
    <property type="entry name" value="ABC_transpr_MalK/UgpC-like"/>
</dbReference>
<dbReference type="InterPro" id="IPR008995">
    <property type="entry name" value="Mo/tungstate-bd_C_term_dom"/>
</dbReference>
<dbReference type="InterPro" id="IPR012340">
    <property type="entry name" value="NA-bd_OB-fold"/>
</dbReference>
<dbReference type="InterPro" id="IPR027417">
    <property type="entry name" value="P-loop_NTPase"/>
</dbReference>
<dbReference type="InterPro" id="IPR013611">
    <property type="entry name" value="Transp-assoc_OB_typ2"/>
</dbReference>
<dbReference type="NCBIfam" id="NF008233">
    <property type="entry name" value="PRK11000.1"/>
    <property type="match status" value="1"/>
</dbReference>
<dbReference type="NCBIfam" id="NF008653">
    <property type="entry name" value="PRK11650.1"/>
    <property type="match status" value="1"/>
</dbReference>
<dbReference type="PANTHER" id="PTHR43875">
    <property type="entry name" value="MALTODEXTRIN IMPORT ATP-BINDING PROTEIN MSMX"/>
    <property type="match status" value="1"/>
</dbReference>
<dbReference type="PANTHER" id="PTHR43875:SF3">
    <property type="entry name" value="MALTOSE_MALTODEXTRIN IMPORT ATP-BINDING PROTEIN MALK"/>
    <property type="match status" value="1"/>
</dbReference>
<dbReference type="Pfam" id="PF00005">
    <property type="entry name" value="ABC_tran"/>
    <property type="match status" value="1"/>
</dbReference>
<dbReference type="Pfam" id="PF08402">
    <property type="entry name" value="TOBE_2"/>
    <property type="match status" value="1"/>
</dbReference>
<dbReference type="SMART" id="SM00382">
    <property type="entry name" value="AAA"/>
    <property type="match status" value="1"/>
</dbReference>
<dbReference type="SUPFAM" id="SSF50331">
    <property type="entry name" value="MOP-like"/>
    <property type="match status" value="1"/>
</dbReference>
<dbReference type="SUPFAM" id="SSF52540">
    <property type="entry name" value="P-loop containing nucleoside triphosphate hydrolases"/>
    <property type="match status" value="1"/>
</dbReference>
<dbReference type="PROSITE" id="PS00211">
    <property type="entry name" value="ABC_TRANSPORTER_1"/>
    <property type="match status" value="1"/>
</dbReference>
<dbReference type="PROSITE" id="PS50893">
    <property type="entry name" value="ABC_TRANSPORTER_2"/>
    <property type="match status" value="1"/>
</dbReference>
<dbReference type="PROSITE" id="PS51245">
    <property type="entry name" value="MALK"/>
    <property type="match status" value="1"/>
</dbReference>
<accession>Q8FB37</accession>
<keyword id="KW-0067">ATP-binding</keyword>
<keyword id="KW-0997">Cell inner membrane</keyword>
<keyword id="KW-1003">Cell membrane</keyword>
<keyword id="KW-0472">Membrane</keyword>
<keyword id="KW-0547">Nucleotide-binding</keyword>
<keyword id="KW-1185">Reference proteome</keyword>
<keyword id="KW-0762">Sugar transport</keyword>
<keyword id="KW-1278">Translocase</keyword>
<keyword id="KW-0813">Transport</keyword>
<evidence type="ECO:0000255" key="1">
    <source>
        <dbReference type="HAMAP-Rule" id="MF_01709"/>
    </source>
</evidence>
<evidence type="ECO:0000305" key="2"/>
<name>MALK_ECOL6</name>
<reference key="1">
    <citation type="journal article" date="2002" name="Proc. Natl. Acad. Sci. U.S.A.">
        <title>Extensive mosaic structure revealed by the complete genome sequence of uropathogenic Escherichia coli.</title>
        <authorList>
            <person name="Welch R.A."/>
            <person name="Burland V."/>
            <person name="Plunkett G. III"/>
            <person name="Redford P."/>
            <person name="Roesch P."/>
            <person name="Rasko D."/>
            <person name="Buckles E.L."/>
            <person name="Liou S.-R."/>
            <person name="Boutin A."/>
            <person name="Hackett J."/>
            <person name="Stroud D."/>
            <person name="Mayhew G.F."/>
            <person name="Rose D.J."/>
            <person name="Zhou S."/>
            <person name="Schwartz D.C."/>
            <person name="Perna N.T."/>
            <person name="Mobley H.L.T."/>
            <person name="Donnenberg M.S."/>
            <person name="Blattner F.R."/>
        </authorList>
    </citation>
    <scope>NUCLEOTIDE SEQUENCE [LARGE SCALE GENOMIC DNA]</scope>
    <source>
        <strain>CFT073 / ATCC 700928 / UPEC</strain>
    </source>
</reference>
<comment type="function">
    <text evidence="1">Part of the ABC transporter complex MalEFGK involved in maltose/maltodextrin import. Responsible for energy coupling to the transport system.</text>
</comment>
<comment type="catalytic activity">
    <reaction evidence="1">
        <text>D-maltose(out) + ATP + H2O = D-maltose(in) + ADP + phosphate + H(+)</text>
        <dbReference type="Rhea" id="RHEA:22132"/>
        <dbReference type="ChEBI" id="CHEBI:15377"/>
        <dbReference type="ChEBI" id="CHEBI:15378"/>
        <dbReference type="ChEBI" id="CHEBI:17306"/>
        <dbReference type="ChEBI" id="CHEBI:30616"/>
        <dbReference type="ChEBI" id="CHEBI:43474"/>
        <dbReference type="ChEBI" id="CHEBI:456216"/>
        <dbReference type="EC" id="7.5.2.1"/>
    </reaction>
</comment>
<comment type="subunit">
    <text evidence="1">The complex is composed of two ATP-binding proteins (MalK), two transmembrane proteins (MalG and MalK) and a solute-binding protein (MalE).</text>
</comment>
<comment type="subcellular location">
    <subcellularLocation>
        <location evidence="1">Cell inner membrane</location>
        <topology evidence="1">Peripheral membrane protein</topology>
    </subcellularLocation>
</comment>
<comment type="similarity">
    <text evidence="1">Belongs to the ABC transporter superfamily. Maltooligosaccharide importer (TC 3.A.1.1.1) family.</text>
</comment>
<comment type="sequence caution" evidence="2">
    <conflict type="erroneous initiation">
        <sequence resource="EMBL-CDS" id="AAN83431"/>
    </conflict>
</comment>
<sequence>MASVQLQNVTKAWGEVVVSKDINLDIHEGEFVVFVGPSGCGKSTLLRMIAGLETITSGDLFIGEKRMNDTPPAERGVGMVFQSYALYPHLSVAENMSFGLKLAGAKKEVINQRVNQVAEVLQLAHLLDRKPKALSGGQRQRVAIGRTLVAEPSVFLLDEPLSNLDAALRVQMRIEISRLHKRLGRTMIYVTHDQVEAMTLADKIVVLDAGRVAQVGKPLELYHYPADRFVAGFIGSPKMNFLPVKVTSTAIDQVQVELPMPNRQQVWLPVESRDVQVGANMSLGIRPEHLLPSDIADVILEGEVQVVEQLGNETQIHIQIPSIRQNLVYRQNDVVLVEEGATFAIGLPPERCHLFREDGTACRRLHKEPGV</sequence>
<organism>
    <name type="scientific">Escherichia coli O6:H1 (strain CFT073 / ATCC 700928 / UPEC)</name>
    <dbReference type="NCBI Taxonomy" id="199310"/>
    <lineage>
        <taxon>Bacteria</taxon>
        <taxon>Pseudomonadati</taxon>
        <taxon>Pseudomonadota</taxon>
        <taxon>Gammaproteobacteria</taxon>
        <taxon>Enterobacterales</taxon>
        <taxon>Enterobacteriaceae</taxon>
        <taxon>Escherichia</taxon>
    </lineage>
</organism>
<gene>
    <name evidence="1" type="primary">malK</name>
    <name type="ordered locus">c5005</name>
</gene>